<name>3MGH_MYCBO</name>
<accession>P65413</accession>
<accession>A0A1R3XZ30</accession>
<accession>O33190</accession>
<accession>X2BIV6</accession>
<organism>
    <name type="scientific">Mycobacterium bovis (strain ATCC BAA-935 / AF2122/97)</name>
    <dbReference type="NCBI Taxonomy" id="233413"/>
    <lineage>
        <taxon>Bacteria</taxon>
        <taxon>Bacillati</taxon>
        <taxon>Actinomycetota</taxon>
        <taxon>Actinomycetes</taxon>
        <taxon>Mycobacteriales</taxon>
        <taxon>Mycobacteriaceae</taxon>
        <taxon>Mycobacterium</taxon>
        <taxon>Mycobacterium tuberculosis complex</taxon>
    </lineage>
</organism>
<gene>
    <name type="ordered locus">BQ2027_MB1714</name>
</gene>
<sequence>MNAEELAIDPVAAAHRLLGATIAGRGVRAMVVEVEAYGGVPDGPWPDAAAHSYRGRNGRNDVMFGPPGRLYTYRSHGIHVCANVACGPDGTAAAVLLRAAAIEDGAELATSRRGQTVRAVALARGPGNLCAALGITMADNGIDLFDPSSPVRLRLNDTHRARSGPRVGVSQAADRPWRLWLTGRPEVSAYRRSSRAPARGASD</sequence>
<feature type="chain" id="PRO_0000100095" description="Putative 3-methyladenine DNA glycosylase">
    <location>
        <begin position="1"/>
        <end position="203"/>
    </location>
</feature>
<protein>
    <recommendedName>
        <fullName evidence="1">Putative 3-methyladenine DNA glycosylase</fullName>
        <ecNumber evidence="1">3.2.2.-</ecNumber>
    </recommendedName>
</protein>
<comment type="similarity">
    <text evidence="1">Belongs to the DNA glycosylase MPG family.</text>
</comment>
<proteinExistence type="inferred from homology"/>
<dbReference type="EC" id="3.2.2.-" evidence="1"/>
<dbReference type="EMBL" id="LT708304">
    <property type="protein sequence ID" value="SIU00318.1"/>
    <property type="molecule type" value="Genomic_DNA"/>
</dbReference>
<dbReference type="RefSeq" id="NP_855367.1">
    <property type="nucleotide sequence ID" value="NC_002945.3"/>
</dbReference>
<dbReference type="RefSeq" id="WP_003408373.1">
    <property type="nucleotide sequence ID" value="NC_002945.4"/>
</dbReference>
<dbReference type="SMR" id="P65413"/>
<dbReference type="KEGG" id="mbo:BQ2027_MB1714"/>
<dbReference type="PATRIC" id="fig|233413.5.peg.1869"/>
<dbReference type="Proteomes" id="UP000001419">
    <property type="component" value="Chromosome"/>
</dbReference>
<dbReference type="GO" id="GO:0003905">
    <property type="term" value="F:alkylbase DNA N-glycosylase activity"/>
    <property type="evidence" value="ECO:0007669"/>
    <property type="project" value="InterPro"/>
</dbReference>
<dbReference type="GO" id="GO:0003677">
    <property type="term" value="F:DNA binding"/>
    <property type="evidence" value="ECO:0007669"/>
    <property type="project" value="InterPro"/>
</dbReference>
<dbReference type="GO" id="GO:0006284">
    <property type="term" value="P:base-excision repair"/>
    <property type="evidence" value="ECO:0007669"/>
    <property type="project" value="InterPro"/>
</dbReference>
<dbReference type="CDD" id="cd00540">
    <property type="entry name" value="AAG"/>
    <property type="match status" value="1"/>
</dbReference>
<dbReference type="Gene3D" id="3.10.300.10">
    <property type="entry name" value="Methylpurine-DNA glycosylase (MPG)"/>
    <property type="match status" value="1"/>
</dbReference>
<dbReference type="HAMAP" id="MF_00527">
    <property type="entry name" value="3MGH"/>
    <property type="match status" value="1"/>
</dbReference>
<dbReference type="InterPro" id="IPR011034">
    <property type="entry name" value="Formyl_transferase-like_C_sf"/>
</dbReference>
<dbReference type="InterPro" id="IPR003180">
    <property type="entry name" value="MPG"/>
</dbReference>
<dbReference type="InterPro" id="IPR036995">
    <property type="entry name" value="MPG_sf"/>
</dbReference>
<dbReference type="NCBIfam" id="TIGR00567">
    <property type="entry name" value="3mg"/>
    <property type="match status" value="1"/>
</dbReference>
<dbReference type="NCBIfam" id="NF002003">
    <property type="entry name" value="PRK00802.1-3"/>
    <property type="match status" value="1"/>
</dbReference>
<dbReference type="PANTHER" id="PTHR10429">
    <property type="entry name" value="DNA-3-METHYLADENINE GLYCOSYLASE"/>
    <property type="match status" value="1"/>
</dbReference>
<dbReference type="PANTHER" id="PTHR10429:SF0">
    <property type="entry name" value="DNA-3-METHYLADENINE GLYCOSYLASE"/>
    <property type="match status" value="1"/>
</dbReference>
<dbReference type="Pfam" id="PF02245">
    <property type="entry name" value="Pur_DNA_glyco"/>
    <property type="match status" value="1"/>
</dbReference>
<dbReference type="SUPFAM" id="SSF50486">
    <property type="entry name" value="FMT C-terminal domain-like"/>
    <property type="match status" value="1"/>
</dbReference>
<reference key="1">
    <citation type="journal article" date="2003" name="Proc. Natl. Acad. Sci. U.S.A.">
        <title>The complete genome sequence of Mycobacterium bovis.</title>
        <authorList>
            <person name="Garnier T."/>
            <person name="Eiglmeier K."/>
            <person name="Camus J.-C."/>
            <person name="Medina N."/>
            <person name="Mansoor H."/>
            <person name="Pryor M."/>
            <person name="Duthoy S."/>
            <person name="Grondin S."/>
            <person name="Lacroix C."/>
            <person name="Monsempe C."/>
            <person name="Simon S."/>
            <person name="Harris B."/>
            <person name="Atkin R."/>
            <person name="Doggett J."/>
            <person name="Mayes R."/>
            <person name="Keating L."/>
            <person name="Wheeler P.R."/>
            <person name="Parkhill J."/>
            <person name="Barrell B.G."/>
            <person name="Cole S.T."/>
            <person name="Gordon S.V."/>
            <person name="Hewinson R.G."/>
        </authorList>
    </citation>
    <scope>NUCLEOTIDE SEQUENCE [LARGE SCALE GENOMIC DNA]</scope>
    <source>
        <strain>ATCC BAA-935 / AF2122/97</strain>
    </source>
</reference>
<reference key="2">
    <citation type="journal article" date="2017" name="Genome Announc.">
        <title>Updated reference genome sequence and annotation of Mycobacterium bovis AF2122/97.</title>
        <authorList>
            <person name="Malone K.M."/>
            <person name="Farrell D."/>
            <person name="Stuber T.P."/>
            <person name="Schubert O.T."/>
            <person name="Aebersold R."/>
            <person name="Robbe-Austerman S."/>
            <person name="Gordon S.V."/>
        </authorList>
    </citation>
    <scope>NUCLEOTIDE SEQUENCE [LARGE SCALE GENOMIC DNA]</scope>
    <scope>GENOME REANNOTATION</scope>
    <source>
        <strain>ATCC BAA-935 / AF2122/97</strain>
    </source>
</reference>
<evidence type="ECO:0000255" key="1">
    <source>
        <dbReference type="HAMAP-Rule" id="MF_00527"/>
    </source>
</evidence>
<keyword id="KW-0227">DNA damage</keyword>
<keyword id="KW-0234">DNA repair</keyword>
<keyword id="KW-0378">Hydrolase</keyword>
<keyword id="KW-1185">Reference proteome</keyword>